<reference key="1">
    <citation type="journal article" date="2002" name="Nature">
        <title>The genome sequence of Schizosaccharomyces pombe.</title>
        <authorList>
            <person name="Wood V."/>
            <person name="Gwilliam R."/>
            <person name="Rajandream M.A."/>
            <person name="Lyne M.H."/>
            <person name="Lyne R."/>
            <person name="Stewart A."/>
            <person name="Sgouros J.G."/>
            <person name="Peat N."/>
            <person name="Hayles J."/>
            <person name="Baker S.G."/>
            <person name="Basham D."/>
            <person name="Bowman S."/>
            <person name="Brooks K."/>
            <person name="Brown D."/>
            <person name="Brown S."/>
            <person name="Chillingworth T."/>
            <person name="Churcher C.M."/>
            <person name="Collins M."/>
            <person name="Connor R."/>
            <person name="Cronin A."/>
            <person name="Davis P."/>
            <person name="Feltwell T."/>
            <person name="Fraser A."/>
            <person name="Gentles S."/>
            <person name="Goble A."/>
            <person name="Hamlin N."/>
            <person name="Harris D.E."/>
            <person name="Hidalgo J."/>
            <person name="Hodgson G."/>
            <person name="Holroyd S."/>
            <person name="Hornsby T."/>
            <person name="Howarth S."/>
            <person name="Huckle E.J."/>
            <person name="Hunt S."/>
            <person name="Jagels K."/>
            <person name="James K.D."/>
            <person name="Jones L."/>
            <person name="Jones M."/>
            <person name="Leather S."/>
            <person name="McDonald S."/>
            <person name="McLean J."/>
            <person name="Mooney P."/>
            <person name="Moule S."/>
            <person name="Mungall K.L."/>
            <person name="Murphy L.D."/>
            <person name="Niblett D."/>
            <person name="Odell C."/>
            <person name="Oliver K."/>
            <person name="O'Neil S."/>
            <person name="Pearson D."/>
            <person name="Quail M.A."/>
            <person name="Rabbinowitsch E."/>
            <person name="Rutherford K.M."/>
            <person name="Rutter S."/>
            <person name="Saunders D."/>
            <person name="Seeger K."/>
            <person name="Sharp S."/>
            <person name="Skelton J."/>
            <person name="Simmonds M.N."/>
            <person name="Squares R."/>
            <person name="Squares S."/>
            <person name="Stevens K."/>
            <person name="Taylor K."/>
            <person name="Taylor R.G."/>
            <person name="Tivey A."/>
            <person name="Walsh S.V."/>
            <person name="Warren T."/>
            <person name="Whitehead S."/>
            <person name="Woodward J.R."/>
            <person name="Volckaert G."/>
            <person name="Aert R."/>
            <person name="Robben J."/>
            <person name="Grymonprez B."/>
            <person name="Weltjens I."/>
            <person name="Vanstreels E."/>
            <person name="Rieger M."/>
            <person name="Schaefer M."/>
            <person name="Mueller-Auer S."/>
            <person name="Gabel C."/>
            <person name="Fuchs M."/>
            <person name="Duesterhoeft A."/>
            <person name="Fritzc C."/>
            <person name="Holzer E."/>
            <person name="Moestl D."/>
            <person name="Hilbert H."/>
            <person name="Borzym K."/>
            <person name="Langer I."/>
            <person name="Beck A."/>
            <person name="Lehrach H."/>
            <person name="Reinhardt R."/>
            <person name="Pohl T.M."/>
            <person name="Eger P."/>
            <person name="Zimmermann W."/>
            <person name="Wedler H."/>
            <person name="Wambutt R."/>
            <person name="Purnelle B."/>
            <person name="Goffeau A."/>
            <person name="Cadieu E."/>
            <person name="Dreano S."/>
            <person name="Gloux S."/>
            <person name="Lelaure V."/>
            <person name="Mottier S."/>
            <person name="Galibert F."/>
            <person name="Aves S.J."/>
            <person name="Xiang Z."/>
            <person name="Hunt C."/>
            <person name="Moore K."/>
            <person name="Hurst S.M."/>
            <person name="Lucas M."/>
            <person name="Rochet M."/>
            <person name="Gaillardin C."/>
            <person name="Tallada V.A."/>
            <person name="Garzon A."/>
            <person name="Thode G."/>
            <person name="Daga R.R."/>
            <person name="Cruzado L."/>
            <person name="Jimenez J."/>
            <person name="Sanchez M."/>
            <person name="del Rey F."/>
            <person name="Benito J."/>
            <person name="Dominguez A."/>
            <person name="Revuelta J.L."/>
            <person name="Moreno S."/>
            <person name="Armstrong J."/>
            <person name="Forsburg S.L."/>
            <person name="Cerutti L."/>
            <person name="Lowe T."/>
            <person name="McCombie W.R."/>
            <person name="Paulsen I."/>
            <person name="Potashkin J."/>
            <person name="Shpakovski G.V."/>
            <person name="Ussery D."/>
            <person name="Barrell B.G."/>
            <person name="Nurse P."/>
        </authorList>
    </citation>
    <scope>NUCLEOTIDE SEQUENCE [LARGE SCALE GENOMIC DNA]</scope>
    <source>
        <strain>972 / ATCC 24843</strain>
    </source>
</reference>
<reference key="2">
    <citation type="journal article" date="2001" name="Nucleic Acids Res.">
        <title>Comprehensive isolation of meiosis-specific genes identifies novel proteins and unusual non-coding transcripts in Schizosaccharomyces pombe.</title>
        <authorList>
            <person name="Watanabe T."/>
            <person name="Miyashita K."/>
            <person name="Saito T.T."/>
            <person name="Yoneki T."/>
            <person name="Kakihara Y."/>
            <person name="Nabeshima K."/>
            <person name="Kishi Y.A."/>
            <person name="Shimoda C."/>
            <person name="Nojima H."/>
        </authorList>
    </citation>
    <scope>NUCLEOTIDE SEQUENCE [MRNA] OF 389-553</scope>
    <source>
        <strain>CD16-1</strain>
    </source>
</reference>
<sequence>MIYINFYELYNIKNIRPLIPSFHVCLLIMFLILYSQEILSFFFMCSKFSMNSLKFCVLFSFKTVYSLLKLIKTLIRKLLYCFHYALDLFADEYKVTANDKHYDYRLKSHRIKDKITTKCKGTTKYFNSRHFEIKNAVENLPSFSSNLTTIGNNLRIFWKNGKIRCIKLTCTPDAEIVNFTSNPNRYRFYETNMQELIRKTICEKSDKAIEKTFLCAQLFKTFCEDGVLQTFQPGFIQLDIASNLQEIKKGTKEYSLKSLEMTTTKESNETLCSNDSKHRIARLKNEDNTQKPISKKRKSKKASHKYLSSRTAPNVDFGNFAKERHRENDVSELYSKTKRTSKIRELYKEIGYDKNEFIHELRENEGPSVLYDSGLDQNGTNYDDAFAAPEAISIEKYVSINEEDPKSPKKETSYQVQEKLSQFFQEEMIHLLEMGEACTSRESQKTRKKNLKENIRKQRTTSTAIRDIAIKFLDDAKCETEDSTNLTNREGEAEKTLNTQPWKNLIENFISELQAEEEENNITEWSDIISVRNDEENQIYELPTCQLETNLLV</sequence>
<name>MEU18_SCHPO</name>
<feature type="chain" id="PRO_0000096450" description="Meiotic expression up-regulated protein 18">
    <location>
        <begin position="1"/>
        <end position="553"/>
    </location>
</feature>
<feature type="region of interest" description="Disordered" evidence="1">
    <location>
        <begin position="267"/>
        <end position="305"/>
    </location>
</feature>
<feature type="compositionally biased region" description="Basic and acidic residues" evidence="1">
    <location>
        <begin position="275"/>
        <end position="289"/>
    </location>
</feature>
<feature type="compositionally biased region" description="Basic residues" evidence="1">
    <location>
        <begin position="293"/>
        <end position="304"/>
    </location>
</feature>
<evidence type="ECO:0000256" key="1">
    <source>
        <dbReference type="SAM" id="MobiDB-lite"/>
    </source>
</evidence>
<organism>
    <name type="scientific">Schizosaccharomyces pombe (strain 972 / ATCC 24843)</name>
    <name type="common">Fission yeast</name>
    <dbReference type="NCBI Taxonomy" id="284812"/>
    <lineage>
        <taxon>Eukaryota</taxon>
        <taxon>Fungi</taxon>
        <taxon>Dikarya</taxon>
        <taxon>Ascomycota</taxon>
        <taxon>Taphrinomycotina</taxon>
        <taxon>Schizosaccharomycetes</taxon>
        <taxon>Schizosaccharomycetales</taxon>
        <taxon>Schizosaccharomycetaceae</taxon>
        <taxon>Schizosaccharomyces</taxon>
    </lineage>
</organism>
<gene>
    <name type="primary">meu18</name>
    <name type="ORF">SPBC409.11</name>
</gene>
<proteinExistence type="evidence at transcript level"/>
<dbReference type="EMBL" id="CU329671">
    <property type="protein sequence ID" value="CAB52613.1"/>
    <property type="molecule type" value="Genomic_DNA"/>
</dbReference>
<dbReference type="EMBL" id="AB054302">
    <property type="protein sequence ID" value="BAB60871.1"/>
    <property type="molecule type" value="mRNA"/>
</dbReference>
<dbReference type="PIR" id="T40438">
    <property type="entry name" value="T40438"/>
</dbReference>
<dbReference type="RefSeq" id="NP_595461.1">
    <property type="nucleotide sequence ID" value="NM_001021371.2"/>
</dbReference>
<dbReference type="BioGRID" id="277473">
    <property type="interactions" value="2"/>
</dbReference>
<dbReference type="STRING" id="284812.Q9UUB3"/>
<dbReference type="iPTMnet" id="Q9UUB3"/>
<dbReference type="PaxDb" id="4896-SPBC409.11.1"/>
<dbReference type="EnsemblFungi" id="SPBC409.11.1">
    <property type="protein sequence ID" value="SPBC409.11.1:pep"/>
    <property type="gene ID" value="SPBC409.11"/>
</dbReference>
<dbReference type="GeneID" id="2540957"/>
<dbReference type="KEGG" id="spo:2540957"/>
<dbReference type="PomBase" id="SPBC409.11">
    <property type="gene designation" value="meu18"/>
</dbReference>
<dbReference type="VEuPathDB" id="FungiDB:SPBC409.11"/>
<dbReference type="HOGENOM" id="CLU_492715_0_0_1"/>
<dbReference type="InParanoid" id="Q9UUB3"/>
<dbReference type="PRO" id="PR:Q9UUB3"/>
<dbReference type="Proteomes" id="UP000002485">
    <property type="component" value="Chromosome II"/>
</dbReference>
<dbReference type="GO" id="GO:0005737">
    <property type="term" value="C:cytoplasm"/>
    <property type="evidence" value="ECO:0007005"/>
    <property type="project" value="PomBase"/>
</dbReference>
<dbReference type="GO" id="GO:0005635">
    <property type="term" value="C:nuclear envelope"/>
    <property type="evidence" value="ECO:0007005"/>
    <property type="project" value="PomBase"/>
</dbReference>
<dbReference type="GO" id="GO:0051321">
    <property type="term" value="P:meiotic cell cycle"/>
    <property type="evidence" value="ECO:0007669"/>
    <property type="project" value="UniProtKB-KW"/>
</dbReference>
<protein>
    <recommendedName>
        <fullName>Meiotic expression up-regulated protein 18</fullName>
    </recommendedName>
</protein>
<accession>Q9UUB3</accession>
<accession>Q96WS4</accession>
<keyword id="KW-0469">Meiosis</keyword>
<keyword id="KW-1185">Reference proteome</keyword>